<gene>
    <name type="primary">Defb3</name>
    <name type="synonym">Bd3</name>
</gene>
<name>DEFB3_MOUSE</name>
<comment type="function">
    <text evidence="3">Antimicrobial activity against Gram-negative bacteria E.coli and P.aeruginosa.</text>
</comment>
<comment type="subcellular location">
    <subcellularLocation>
        <location>Secreted</location>
    </subcellularLocation>
</comment>
<comment type="tissue specificity">
    <text evidence="3 4">Highest expression in salivary glands, epididymis, ovary and pancreas and to a lesser extent in lung, liver and brain. Low or no expression in skeletal muscle and tongue.</text>
</comment>
<comment type="induction">
    <text evidence="3">By bacterial infection.</text>
</comment>
<comment type="similarity">
    <text evidence="5">Belongs to the beta-defensin family. LAP/TAP subfamily.</text>
</comment>
<feature type="signal peptide" evidence="2">
    <location>
        <begin position="1"/>
        <end position="20"/>
    </location>
</feature>
<feature type="propeptide" id="PRO_0000006928" evidence="2">
    <location>
        <begin position="21"/>
        <end position="22"/>
    </location>
</feature>
<feature type="peptide" id="PRO_0000006929" description="Beta-defensin 3">
    <location>
        <begin position="23"/>
        <end position="63"/>
    </location>
</feature>
<feature type="disulfide bond" evidence="1">
    <location>
        <begin position="31"/>
        <end position="59"/>
    </location>
</feature>
<feature type="disulfide bond" evidence="1">
    <location>
        <begin position="38"/>
        <end position="52"/>
    </location>
</feature>
<feature type="disulfide bond" evidence="1">
    <location>
        <begin position="42"/>
        <end position="60"/>
    </location>
</feature>
<protein>
    <recommendedName>
        <fullName>Beta-defensin 3</fullName>
        <shortName>BD-3</shortName>
        <shortName>mBD-3</shortName>
    </recommendedName>
    <alternativeName>
        <fullName>Defensin, beta 3</fullName>
    </alternativeName>
</protein>
<reference key="1">
    <citation type="journal article" date="1999" name="Infect. Immun.">
        <title>Mouse beta-defensin 3 is an inducible antimicrobial peptide expressed in the epithelia of multiple organs.</title>
        <authorList>
            <person name="Bals R."/>
            <person name="Wang X."/>
            <person name="Meegalla R.L."/>
            <person name="Wattler S."/>
            <person name="Weiner D.J."/>
            <person name="Nehls M.C."/>
            <person name="Wilson J.M."/>
        </authorList>
    </citation>
    <scope>NUCLEOTIDE SEQUENCE [GENOMIC DNA / MRNA]</scope>
    <scope>FUNCTION</scope>
    <scope>INDUCTION</scope>
    <scope>TISSUE SPECIFICITY</scope>
    <source>
        <strain>C57BL/6J</strain>
        <tissue>Lung</tissue>
    </source>
</reference>
<reference key="2">
    <citation type="journal article" date="2004" name="Genome Res.">
        <title>The status, quality, and expansion of the NIH full-length cDNA project: the Mammalian Gene Collection (MGC).</title>
        <authorList>
            <consortium name="The MGC Project Team"/>
        </authorList>
    </citation>
    <scope>NUCLEOTIDE SEQUENCE [LARGE SCALE MRNA]</scope>
</reference>
<reference key="3">
    <citation type="journal article" date="2000" name="J. Biol. Chem.">
        <title>A novel murine beta-defensin expressed in tongue, esophagus, and trachea.</title>
        <authorList>
            <person name="Jia H.P."/>
            <person name="Wowk S.A."/>
            <person name="Schutte B.C."/>
            <person name="Lee S.K."/>
            <person name="Vivado A."/>
            <person name="Tack B.F."/>
            <person name="Bevins C.L."/>
            <person name="McCray P.B. Jr."/>
        </authorList>
    </citation>
    <scope>TISSUE SPECIFICITY</scope>
    <source>
        <strain>129/SvJ</strain>
        <strain>C57BL/6J</strain>
        <strain>FVB/NJ</strain>
        <tissue>Lung</tissue>
    </source>
</reference>
<dbReference type="EMBL" id="AF093245">
    <property type="protein sequence ID" value="AAD29573.1"/>
    <property type="molecule type" value="Genomic_DNA"/>
</dbReference>
<dbReference type="EMBL" id="AF092929">
    <property type="protein sequence ID" value="AAD29572.1"/>
    <property type="molecule type" value="mRNA"/>
</dbReference>
<dbReference type="EMBL" id="BC114344">
    <property type="protein sequence ID" value="AAI14345.1"/>
    <property type="molecule type" value="mRNA"/>
</dbReference>
<dbReference type="EMBL" id="BC116176">
    <property type="protein sequence ID" value="AAI16177.1"/>
    <property type="molecule type" value="mRNA"/>
</dbReference>
<dbReference type="EMBL" id="BC116177">
    <property type="protein sequence ID" value="AAI16178.1"/>
    <property type="molecule type" value="mRNA"/>
</dbReference>
<dbReference type="EMBL" id="BC134358">
    <property type="protein sequence ID" value="AAI34359.1"/>
    <property type="molecule type" value="mRNA"/>
</dbReference>
<dbReference type="CCDS" id="CCDS40258.1"/>
<dbReference type="RefSeq" id="NP_038784.1">
    <property type="nucleotide sequence ID" value="NM_013756.2"/>
</dbReference>
<dbReference type="SMR" id="Q9WTL0"/>
<dbReference type="FunCoup" id="Q9WTL0">
    <property type="interactions" value="169"/>
</dbReference>
<dbReference type="STRING" id="10090.ENSMUSP00000033852"/>
<dbReference type="TCDB" id="1.C.85.1.8">
    <property type="family name" value="the pore-forming Beta-defensin (Beta-defensin) family"/>
</dbReference>
<dbReference type="PaxDb" id="10090-ENSMUSP00000033852"/>
<dbReference type="ProteomicsDB" id="279191"/>
<dbReference type="DNASU" id="27358"/>
<dbReference type="Ensembl" id="ENSMUST00000033852.8">
    <property type="protein sequence ID" value="ENSMUSP00000033852.8"/>
    <property type="gene ID" value="ENSMUSG00000039775.8"/>
</dbReference>
<dbReference type="GeneID" id="27358"/>
<dbReference type="KEGG" id="mmu:27358"/>
<dbReference type="UCSC" id="uc009lao.1">
    <property type="organism name" value="mouse"/>
</dbReference>
<dbReference type="AGR" id="MGI:1351612"/>
<dbReference type="CTD" id="27358"/>
<dbReference type="MGI" id="MGI:1351612">
    <property type="gene designation" value="Defb3"/>
</dbReference>
<dbReference type="VEuPathDB" id="HostDB:ENSMUSG00000039775"/>
<dbReference type="eggNOG" id="ENOG502T3P6">
    <property type="taxonomic scope" value="Eukaryota"/>
</dbReference>
<dbReference type="GeneTree" id="ENSGT00940000160995"/>
<dbReference type="HOGENOM" id="CLU_189296_4_1_1"/>
<dbReference type="InParanoid" id="Q9WTL0"/>
<dbReference type="OMA" id="PGTKCCR"/>
<dbReference type="OrthoDB" id="9623680at2759"/>
<dbReference type="PhylomeDB" id="Q9WTL0"/>
<dbReference type="BioGRID-ORCS" id="27358">
    <property type="hits" value="2 hits in 76 CRISPR screens"/>
</dbReference>
<dbReference type="PRO" id="PR:Q9WTL0"/>
<dbReference type="Proteomes" id="UP000000589">
    <property type="component" value="Chromosome 8"/>
</dbReference>
<dbReference type="RNAct" id="Q9WTL0">
    <property type="molecule type" value="protein"/>
</dbReference>
<dbReference type="Bgee" id="ENSMUSG00000039775">
    <property type="expression patterns" value="Expressed in lip and 9 other cell types or tissues"/>
</dbReference>
<dbReference type="GO" id="GO:0005576">
    <property type="term" value="C:extracellular region"/>
    <property type="evidence" value="ECO:0007669"/>
    <property type="project" value="UniProtKB-SubCell"/>
</dbReference>
<dbReference type="GO" id="GO:0042742">
    <property type="term" value="P:defense response to bacterium"/>
    <property type="evidence" value="ECO:0000315"/>
    <property type="project" value="MGI"/>
</dbReference>
<dbReference type="FunFam" id="3.10.360.10:FF:000001">
    <property type="entry name" value="Beta-defensin 1"/>
    <property type="match status" value="1"/>
</dbReference>
<dbReference type="Gene3D" id="3.10.360.10">
    <property type="entry name" value="Antimicrobial Peptide, Beta-defensin 2, Chain A"/>
    <property type="match status" value="1"/>
</dbReference>
<dbReference type="InterPro" id="IPR001855">
    <property type="entry name" value="Defensin_beta-like"/>
</dbReference>
<dbReference type="PANTHER" id="PTHR20515">
    <property type="entry name" value="BETA-DEFENSIN"/>
    <property type="match status" value="1"/>
</dbReference>
<dbReference type="PANTHER" id="PTHR20515:SF2">
    <property type="entry name" value="DEFENSIN BETA 4A"/>
    <property type="match status" value="1"/>
</dbReference>
<dbReference type="Pfam" id="PF00711">
    <property type="entry name" value="Defensin_beta"/>
    <property type="match status" value="1"/>
</dbReference>
<dbReference type="SUPFAM" id="SSF57392">
    <property type="entry name" value="Defensin-like"/>
    <property type="match status" value="1"/>
</dbReference>
<proteinExistence type="evidence at transcript level"/>
<evidence type="ECO:0000250" key="1"/>
<evidence type="ECO:0000255" key="2"/>
<evidence type="ECO:0000269" key="3">
    <source>
    </source>
</evidence>
<evidence type="ECO:0000269" key="4">
    <source>
    </source>
</evidence>
<evidence type="ECO:0000305" key="5"/>
<accession>Q9WTL0</accession>
<accession>Q29R78</accession>
<organism>
    <name type="scientific">Mus musculus</name>
    <name type="common">Mouse</name>
    <dbReference type="NCBI Taxonomy" id="10090"/>
    <lineage>
        <taxon>Eukaryota</taxon>
        <taxon>Metazoa</taxon>
        <taxon>Chordata</taxon>
        <taxon>Craniata</taxon>
        <taxon>Vertebrata</taxon>
        <taxon>Euteleostomi</taxon>
        <taxon>Mammalia</taxon>
        <taxon>Eutheria</taxon>
        <taxon>Euarchontoglires</taxon>
        <taxon>Glires</taxon>
        <taxon>Rodentia</taxon>
        <taxon>Myomorpha</taxon>
        <taxon>Muroidea</taxon>
        <taxon>Muridae</taxon>
        <taxon>Murinae</taxon>
        <taxon>Mus</taxon>
        <taxon>Mus</taxon>
    </lineage>
</organism>
<keyword id="KW-0044">Antibiotic</keyword>
<keyword id="KW-0929">Antimicrobial</keyword>
<keyword id="KW-0165">Cleavage on pair of basic residues</keyword>
<keyword id="KW-0211">Defensin</keyword>
<keyword id="KW-1015">Disulfide bond</keyword>
<keyword id="KW-1185">Reference proteome</keyword>
<keyword id="KW-0964">Secreted</keyword>
<keyword id="KW-0732">Signal</keyword>
<sequence length="63" mass="7126">MRIHYLLFAFLLVLLSPPAAFSKKINNPVSCLRKGGRCWNRCIGNTRQIGSCGVPFLKCCKRK</sequence>